<comment type="function">
    <text evidence="1">Binds 23S rRNA and is also seen to make contacts with the A and possibly P site tRNAs.</text>
</comment>
<comment type="subunit">
    <text evidence="1">Part of the 50S ribosomal subunit.</text>
</comment>
<comment type="similarity">
    <text evidence="1">Belongs to the universal ribosomal protein uL16 family.</text>
</comment>
<gene>
    <name evidence="1" type="primary">rplP</name>
    <name type="ordered locus">PSPPH_4585</name>
</gene>
<proteinExistence type="inferred from homology"/>
<name>RL16_PSE14</name>
<dbReference type="EMBL" id="CP000058">
    <property type="protein sequence ID" value="AAZ37238.1"/>
    <property type="molecule type" value="Genomic_DNA"/>
</dbReference>
<dbReference type="RefSeq" id="WP_002555482.1">
    <property type="nucleotide sequence ID" value="NC_005773.3"/>
</dbReference>
<dbReference type="SMR" id="Q48D43"/>
<dbReference type="GeneID" id="96221023"/>
<dbReference type="KEGG" id="psp:PSPPH_4585"/>
<dbReference type="eggNOG" id="COG0197">
    <property type="taxonomic scope" value="Bacteria"/>
</dbReference>
<dbReference type="HOGENOM" id="CLU_078858_2_1_6"/>
<dbReference type="Proteomes" id="UP000000551">
    <property type="component" value="Chromosome"/>
</dbReference>
<dbReference type="GO" id="GO:0022625">
    <property type="term" value="C:cytosolic large ribosomal subunit"/>
    <property type="evidence" value="ECO:0007669"/>
    <property type="project" value="TreeGrafter"/>
</dbReference>
<dbReference type="GO" id="GO:0019843">
    <property type="term" value="F:rRNA binding"/>
    <property type="evidence" value="ECO:0007669"/>
    <property type="project" value="UniProtKB-UniRule"/>
</dbReference>
<dbReference type="GO" id="GO:0003735">
    <property type="term" value="F:structural constituent of ribosome"/>
    <property type="evidence" value="ECO:0007669"/>
    <property type="project" value="InterPro"/>
</dbReference>
<dbReference type="GO" id="GO:0000049">
    <property type="term" value="F:tRNA binding"/>
    <property type="evidence" value="ECO:0007669"/>
    <property type="project" value="UniProtKB-KW"/>
</dbReference>
<dbReference type="GO" id="GO:0006412">
    <property type="term" value="P:translation"/>
    <property type="evidence" value="ECO:0007669"/>
    <property type="project" value="UniProtKB-UniRule"/>
</dbReference>
<dbReference type="CDD" id="cd01433">
    <property type="entry name" value="Ribosomal_L16_L10e"/>
    <property type="match status" value="1"/>
</dbReference>
<dbReference type="FunFam" id="3.90.1170.10:FF:000001">
    <property type="entry name" value="50S ribosomal protein L16"/>
    <property type="match status" value="1"/>
</dbReference>
<dbReference type="Gene3D" id="3.90.1170.10">
    <property type="entry name" value="Ribosomal protein L10e/L16"/>
    <property type="match status" value="1"/>
</dbReference>
<dbReference type="HAMAP" id="MF_01342">
    <property type="entry name" value="Ribosomal_uL16"/>
    <property type="match status" value="1"/>
</dbReference>
<dbReference type="InterPro" id="IPR047873">
    <property type="entry name" value="Ribosomal_uL16"/>
</dbReference>
<dbReference type="InterPro" id="IPR000114">
    <property type="entry name" value="Ribosomal_uL16_bact-type"/>
</dbReference>
<dbReference type="InterPro" id="IPR020798">
    <property type="entry name" value="Ribosomal_uL16_CS"/>
</dbReference>
<dbReference type="InterPro" id="IPR016180">
    <property type="entry name" value="Ribosomal_uL16_dom"/>
</dbReference>
<dbReference type="InterPro" id="IPR036920">
    <property type="entry name" value="Ribosomal_uL16_sf"/>
</dbReference>
<dbReference type="NCBIfam" id="TIGR01164">
    <property type="entry name" value="rplP_bact"/>
    <property type="match status" value="1"/>
</dbReference>
<dbReference type="PANTHER" id="PTHR12220">
    <property type="entry name" value="50S/60S RIBOSOMAL PROTEIN L16"/>
    <property type="match status" value="1"/>
</dbReference>
<dbReference type="PANTHER" id="PTHR12220:SF13">
    <property type="entry name" value="LARGE RIBOSOMAL SUBUNIT PROTEIN UL16M"/>
    <property type="match status" value="1"/>
</dbReference>
<dbReference type="Pfam" id="PF00252">
    <property type="entry name" value="Ribosomal_L16"/>
    <property type="match status" value="1"/>
</dbReference>
<dbReference type="PRINTS" id="PR00060">
    <property type="entry name" value="RIBOSOMALL16"/>
</dbReference>
<dbReference type="SUPFAM" id="SSF54686">
    <property type="entry name" value="Ribosomal protein L16p/L10e"/>
    <property type="match status" value="1"/>
</dbReference>
<dbReference type="PROSITE" id="PS00586">
    <property type="entry name" value="RIBOSOMAL_L16_1"/>
    <property type="match status" value="1"/>
</dbReference>
<dbReference type="PROSITE" id="PS00701">
    <property type="entry name" value="RIBOSOMAL_L16_2"/>
    <property type="match status" value="1"/>
</dbReference>
<reference key="1">
    <citation type="journal article" date="2005" name="J. Bacteriol.">
        <title>Whole-genome sequence analysis of Pseudomonas syringae pv. phaseolicola 1448A reveals divergence among pathovars in genes involved in virulence and transposition.</title>
        <authorList>
            <person name="Joardar V."/>
            <person name="Lindeberg M."/>
            <person name="Jackson R.W."/>
            <person name="Selengut J."/>
            <person name="Dodson R."/>
            <person name="Brinkac L.M."/>
            <person name="Daugherty S.C."/>
            <person name="DeBoy R.T."/>
            <person name="Durkin A.S."/>
            <person name="Gwinn Giglio M."/>
            <person name="Madupu R."/>
            <person name="Nelson W.C."/>
            <person name="Rosovitz M.J."/>
            <person name="Sullivan S.A."/>
            <person name="Crabtree J."/>
            <person name="Creasy T."/>
            <person name="Davidsen T.M."/>
            <person name="Haft D.H."/>
            <person name="Zafar N."/>
            <person name="Zhou L."/>
            <person name="Halpin R."/>
            <person name="Holley T."/>
            <person name="Khouri H.M."/>
            <person name="Feldblyum T.V."/>
            <person name="White O."/>
            <person name="Fraser C.M."/>
            <person name="Chatterjee A.K."/>
            <person name="Cartinhour S."/>
            <person name="Schneider D."/>
            <person name="Mansfield J.W."/>
            <person name="Collmer A."/>
            <person name="Buell R."/>
        </authorList>
    </citation>
    <scope>NUCLEOTIDE SEQUENCE [LARGE SCALE GENOMIC DNA]</scope>
    <source>
        <strain>1448A / Race 6</strain>
    </source>
</reference>
<feature type="chain" id="PRO_0000062176" description="Large ribosomal subunit protein uL16">
    <location>
        <begin position="1"/>
        <end position="137"/>
    </location>
</feature>
<sequence length="137" mass="15430">MLQPKRTKFRKQMTGHNRGLALRGSKVSFGEFALKSVARGRLTARQIESARRALTRHVKRGGKIWIRVFPDKPVTKKPLEVRMGKGKGNVEYWVAQIQPGKVLYEIEGVTEELAREAFALAAAKLPLATSFVKRTVM</sequence>
<organism>
    <name type="scientific">Pseudomonas savastanoi pv. phaseolicola (strain 1448A / Race 6)</name>
    <name type="common">Pseudomonas syringae pv. phaseolicola (strain 1448A / Race 6)</name>
    <dbReference type="NCBI Taxonomy" id="264730"/>
    <lineage>
        <taxon>Bacteria</taxon>
        <taxon>Pseudomonadati</taxon>
        <taxon>Pseudomonadota</taxon>
        <taxon>Gammaproteobacteria</taxon>
        <taxon>Pseudomonadales</taxon>
        <taxon>Pseudomonadaceae</taxon>
        <taxon>Pseudomonas</taxon>
    </lineage>
</organism>
<keyword id="KW-0687">Ribonucleoprotein</keyword>
<keyword id="KW-0689">Ribosomal protein</keyword>
<keyword id="KW-0694">RNA-binding</keyword>
<keyword id="KW-0699">rRNA-binding</keyword>
<keyword id="KW-0820">tRNA-binding</keyword>
<protein>
    <recommendedName>
        <fullName evidence="1">Large ribosomal subunit protein uL16</fullName>
    </recommendedName>
    <alternativeName>
        <fullName evidence="2">50S ribosomal protein L16</fullName>
    </alternativeName>
</protein>
<evidence type="ECO:0000255" key="1">
    <source>
        <dbReference type="HAMAP-Rule" id="MF_01342"/>
    </source>
</evidence>
<evidence type="ECO:0000305" key="2"/>
<accession>Q48D43</accession>